<organism>
    <name type="scientific">Gallus gallus</name>
    <name type="common">Chicken</name>
    <dbReference type="NCBI Taxonomy" id="9031"/>
    <lineage>
        <taxon>Eukaryota</taxon>
        <taxon>Metazoa</taxon>
        <taxon>Chordata</taxon>
        <taxon>Craniata</taxon>
        <taxon>Vertebrata</taxon>
        <taxon>Euteleostomi</taxon>
        <taxon>Archelosauria</taxon>
        <taxon>Archosauria</taxon>
        <taxon>Dinosauria</taxon>
        <taxon>Saurischia</taxon>
        <taxon>Theropoda</taxon>
        <taxon>Coelurosauria</taxon>
        <taxon>Aves</taxon>
        <taxon>Neognathae</taxon>
        <taxon>Galloanserae</taxon>
        <taxon>Galliformes</taxon>
        <taxon>Phasianidae</taxon>
        <taxon>Phasianinae</taxon>
        <taxon>Gallus</taxon>
    </lineage>
</organism>
<dbReference type="EMBL" id="AF022151">
    <property type="protein sequence ID" value="AAB82710.1"/>
    <property type="molecule type" value="mRNA"/>
</dbReference>
<dbReference type="RefSeq" id="NP_990399.1">
    <property type="nucleotide sequence ID" value="NM_205068.2"/>
</dbReference>
<dbReference type="SMR" id="O42230"/>
<dbReference type="FunCoup" id="O42230">
    <property type="interactions" value="259"/>
</dbReference>
<dbReference type="STRING" id="9031.ENSGALP00000052169"/>
<dbReference type="PaxDb" id="9031-ENSGALP00000021739"/>
<dbReference type="Ensembl" id="ENSGALT00010029938.1">
    <property type="protein sequence ID" value="ENSGALP00010017421.1"/>
    <property type="gene ID" value="ENSGALG00010012489.1"/>
</dbReference>
<dbReference type="GeneID" id="395950"/>
<dbReference type="KEGG" id="gga:395950"/>
<dbReference type="CTD" id="2637"/>
<dbReference type="VEuPathDB" id="HostDB:geneid_395950"/>
<dbReference type="eggNOG" id="KOG0489">
    <property type="taxonomic scope" value="Eukaryota"/>
</dbReference>
<dbReference type="GeneTree" id="ENSGT00940000154365"/>
<dbReference type="InParanoid" id="O42230"/>
<dbReference type="OMA" id="EDECNRK"/>
<dbReference type="OrthoDB" id="6159439at2759"/>
<dbReference type="PhylomeDB" id="O42230"/>
<dbReference type="PRO" id="PR:O42230"/>
<dbReference type="Proteomes" id="UP000000539">
    <property type="component" value="Chromosome 7"/>
</dbReference>
<dbReference type="GO" id="GO:0005654">
    <property type="term" value="C:nucleoplasm"/>
    <property type="evidence" value="ECO:0000304"/>
    <property type="project" value="Reactome"/>
</dbReference>
<dbReference type="GO" id="GO:0005634">
    <property type="term" value="C:nucleus"/>
    <property type="evidence" value="ECO:0000318"/>
    <property type="project" value="GO_Central"/>
</dbReference>
<dbReference type="GO" id="GO:0001228">
    <property type="term" value="F:DNA-binding transcription activator activity, RNA polymerase II-specific"/>
    <property type="evidence" value="ECO:0007669"/>
    <property type="project" value="Ensembl"/>
</dbReference>
<dbReference type="GO" id="GO:0000981">
    <property type="term" value="F:DNA-binding transcription factor activity, RNA polymerase II-specific"/>
    <property type="evidence" value="ECO:0000318"/>
    <property type="project" value="GO_Central"/>
</dbReference>
<dbReference type="GO" id="GO:0000979">
    <property type="term" value="F:RNA polymerase II core promoter sequence-specific DNA binding"/>
    <property type="evidence" value="ECO:0007669"/>
    <property type="project" value="Ensembl"/>
</dbReference>
<dbReference type="GO" id="GO:0000977">
    <property type="term" value="F:RNA polymerase II transcription regulatory region sequence-specific DNA binding"/>
    <property type="evidence" value="ECO:0000318"/>
    <property type="project" value="GO_Central"/>
</dbReference>
<dbReference type="GO" id="GO:0061629">
    <property type="term" value="F:RNA polymerase II-specific DNA-binding transcription factor binding"/>
    <property type="evidence" value="ECO:0007669"/>
    <property type="project" value="Ensembl"/>
</dbReference>
<dbReference type="GO" id="GO:0048483">
    <property type="term" value="P:autonomic nervous system development"/>
    <property type="evidence" value="ECO:0007669"/>
    <property type="project" value="Ensembl"/>
</dbReference>
<dbReference type="GO" id="GO:0007411">
    <property type="term" value="P:axon guidance"/>
    <property type="evidence" value="ECO:0007669"/>
    <property type="project" value="Ensembl"/>
</dbReference>
<dbReference type="GO" id="GO:0001569">
    <property type="term" value="P:branching involved in blood vessel morphogenesis"/>
    <property type="evidence" value="ECO:0007669"/>
    <property type="project" value="Ensembl"/>
</dbReference>
<dbReference type="GO" id="GO:0021930">
    <property type="term" value="P:cerebellar granule cell precursor proliferation"/>
    <property type="evidence" value="ECO:0007669"/>
    <property type="project" value="Ensembl"/>
</dbReference>
<dbReference type="GO" id="GO:0021549">
    <property type="term" value="P:cerebellum development"/>
    <property type="evidence" value="ECO:0007669"/>
    <property type="project" value="Ensembl"/>
</dbReference>
<dbReference type="GO" id="GO:0021884">
    <property type="term" value="P:forebrain neuron development"/>
    <property type="evidence" value="ECO:0007669"/>
    <property type="project" value="Ensembl"/>
</dbReference>
<dbReference type="GO" id="GO:0042472">
    <property type="term" value="P:inner ear morphogenesis"/>
    <property type="evidence" value="ECO:0007669"/>
    <property type="project" value="Ensembl"/>
</dbReference>
<dbReference type="GO" id="GO:0021555">
    <property type="term" value="P:midbrain-hindbrain boundary morphogenesis"/>
    <property type="evidence" value="ECO:0007669"/>
    <property type="project" value="Ensembl"/>
</dbReference>
<dbReference type="GO" id="GO:0001755">
    <property type="term" value="P:neural crest cell migration"/>
    <property type="evidence" value="ECO:0007669"/>
    <property type="project" value="Ensembl"/>
</dbReference>
<dbReference type="GO" id="GO:0051960">
    <property type="term" value="P:regulation of nervous system development"/>
    <property type="evidence" value="ECO:0000318"/>
    <property type="project" value="GO_Central"/>
</dbReference>
<dbReference type="GO" id="GO:0006357">
    <property type="term" value="P:regulation of transcription by RNA polymerase II"/>
    <property type="evidence" value="ECO:0000318"/>
    <property type="project" value="GO_Central"/>
</dbReference>
<dbReference type="GO" id="GO:0021568">
    <property type="term" value="P:rhombomere 2 development"/>
    <property type="evidence" value="ECO:0007669"/>
    <property type="project" value="Ensembl"/>
</dbReference>
<dbReference type="GO" id="GO:0021794">
    <property type="term" value="P:thalamus development"/>
    <property type="evidence" value="ECO:0007669"/>
    <property type="project" value="Ensembl"/>
</dbReference>
<dbReference type="CDD" id="cd00086">
    <property type="entry name" value="homeodomain"/>
    <property type="match status" value="1"/>
</dbReference>
<dbReference type="FunFam" id="1.10.10.60:FF:000248">
    <property type="entry name" value="Gastrulation brain homeobox 2"/>
    <property type="match status" value="1"/>
</dbReference>
<dbReference type="Gene3D" id="1.10.10.60">
    <property type="entry name" value="Homeodomain-like"/>
    <property type="match status" value="1"/>
</dbReference>
<dbReference type="InterPro" id="IPR042982">
    <property type="entry name" value="GBX-1/2"/>
</dbReference>
<dbReference type="InterPro" id="IPR001356">
    <property type="entry name" value="HD"/>
</dbReference>
<dbReference type="InterPro" id="IPR020479">
    <property type="entry name" value="HD_metazoa"/>
</dbReference>
<dbReference type="InterPro" id="IPR017970">
    <property type="entry name" value="Homeobox_CS"/>
</dbReference>
<dbReference type="InterPro" id="IPR009057">
    <property type="entry name" value="Homeodomain-like_sf"/>
</dbReference>
<dbReference type="PANTHER" id="PTHR24334">
    <property type="entry name" value="HOMEOBOX PROTEIN GBX"/>
    <property type="match status" value="1"/>
</dbReference>
<dbReference type="PANTHER" id="PTHR24334:SF3">
    <property type="entry name" value="HOMEOBOX PROTEIN GBX-2"/>
    <property type="match status" value="1"/>
</dbReference>
<dbReference type="Pfam" id="PF00046">
    <property type="entry name" value="Homeodomain"/>
    <property type="match status" value="1"/>
</dbReference>
<dbReference type="PRINTS" id="PR00024">
    <property type="entry name" value="HOMEOBOX"/>
</dbReference>
<dbReference type="SMART" id="SM00389">
    <property type="entry name" value="HOX"/>
    <property type="match status" value="1"/>
</dbReference>
<dbReference type="SUPFAM" id="SSF46689">
    <property type="entry name" value="Homeodomain-like"/>
    <property type="match status" value="1"/>
</dbReference>
<dbReference type="PROSITE" id="PS00027">
    <property type="entry name" value="HOMEOBOX_1"/>
    <property type="match status" value="1"/>
</dbReference>
<dbReference type="PROSITE" id="PS50071">
    <property type="entry name" value="HOMEOBOX_2"/>
    <property type="match status" value="1"/>
</dbReference>
<name>GBX2_CHICK</name>
<evidence type="ECO:0000255" key="1">
    <source>
        <dbReference type="PROSITE-ProRule" id="PRU00108"/>
    </source>
</evidence>
<evidence type="ECO:0000256" key="2">
    <source>
        <dbReference type="SAM" id="MobiDB-lite"/>
    </source>
</evidence>
<evidence type="ECO:0000305" key="3"/>
<gene>
    <name type="primary">GBX2</name>
</gene>
<proteinExistence type="evidence at transcript level"/>
<comment type="function">
    <text>May act as a transcription factor for cell pluripotency and differentiation in the embryo.</text>
</comment>
<comment type="subcellular location">
    <subcellularLocation>
        <location evidence="3">Nucleus</location>
    </subcellularLocation>
</comment>
<protein>
    <recommendedName>
        <fullName>Homeobox protein GBX-2</fullName>
    </recommendedName>
    <alternativeName>
        <fullName>Gastrulation and brain-specific homeobox protein 2</fullName>
    </alternativeName>
</protein>
<sequence>MSAAFQPSLMMMQRPLGSSTAFSIDSLIGSPPPPAPGHFVYTGYPMFMPYRPVVLPPPPPALPQAALQPPLPPAPPPPLPALPGAFCPGLAQGMALTSTLMAALPGSFPASPPRPEAARKFAPPGNFDKADGLPPPDGGGGGGDDGKTGGGLLPFPAADAVHASLAGALRGGPKDDPKAEEEAKGREENFSMDSDLDYSSDENGPAPAAPREEDCGTALEENPPSAANAAANAAATGKNRRRRTAFTSEQLLELEKEFHCKKYLSLTERSQIAHALKLSEVQVKIWFQNRRAKWKRVKAGNASSKAGEPSRNPKIVVPIPVHVSRFAIRSQHQQLEQARP</sequence>
<reference key="1">
    <citation type="journal article" date="1997" name="Cell">
        <title>The homeobox gene GBX2, a target of the myb oncogene, mediates autocrine growth and monocyte differentiation.</title>
        <authorList>
            <person name="Kowenz-Leutz E."/>
            <person name="Herr P."/>
            <person name="Niss K."/>
            <person name="Leutz A."/>
        </authorList>
    </citation>
    <scope>NUCLEOTIDE SEQUENCE [MRNA]</scope>
</reference>
<accession>O42230</accession>
<feature type="chain" id="PRO_0000048882" description="Homeobox protein GBX-2">
    <location>
        <begin position="1"/>
        <end position="340"/>
    </location>
</feature>
<feature type="DNA-binding region" description="Homeobox" evidence="1">
    <location>
        <begin position="239"/>
        <end position="298"/>
    </location>
</feature>
<feature type="region of interest" description="Disordered" evidence="2">
    <location>
        <begin position="106"/>
        <end position="155"/>
    </location>
</feature>
<feature type="region of interest" description="Disordered" evidence="2">
    <location>
        <begin position="167"/>
        <end position="242"/>
    </location>
</feature>
<feature type="compositionally biased region" description="Gly residues" evidence="2">
    <location>
        <begin position="138"/>
        <end position="152"/>
    </location>
</feature>
<feature type="compositionally biased region" description="Basic and acidic residues" evidence="2">
    <location>
        <begin position="172"/>
        <end position="189"/>
    </location>
</feature>
<feature type="compositionally biased region" description="Low complexity" evidence="2">
    <location>
        <begin position="226"/>
        <end position="235"/>
    </location>
</feature>
<keyword id="KW-0238">DNA-binding</keyword>
<keyword id="KW-0371">Homeobox</keyword>
<keyword id="KW-0539">Nucleus</keyword>
<keyword id="KW-1185">Reference proteome</keyword>
<keyword id="KW-0804">Transcription</keyword>
<keyword id="KW-0805">Transcription regulation</keyword>